<comment type="function">
    <text evidence="1">Component of the SRB8-11 complex. The SRB8-11 complex is a regulatory module of the Mediator complex which is itself involved in regulation of basal and activated RNA polymerase II-dependent transcription. The SRB8-11 complex may be involved in the transcriptional repression of a subset of genes regulated by Mediator. It may inhibit the association of the Mediator complex with RNA polymerase II to form the holoenzyme complex (By similarity).</text>
</comment>
<comment type="subunit">
    <text evidence="1">Component of the SRB8-11 complex, which itself associates with the Mediator complex.</text>
</comment>
<comment type="subcellular location">
    <subcellularLocation>
        <location evidence="3">Nucleus</location>
    </subcellularLocation>
</comment>
<comment type="similarity">
    <text evidence="3">Belongs to the Mediator complex subunit 12 family.</text>
</comment>
<dbReference type="EMBL" id="CR382135">
    <property type="protein sequence ID" value="CAG86139.2"/>
    <property type="molecule type" value="Genomic_DNA"/>
</dbReference>
<dbReference type="RefSeq" id="XP_458068.2">
    <property type="nucleotide sequence ID" value="XM_458068.1"/>
</dbReference>
<dbReference type="FunCoup" id="Q6BUQ1">
    <property type="interactions" value="154"/>
</dbReference>
<dbReference type="STRING" id="284592.Q6BUQ1"/>
<dbReference type="GeneID" id="2900807"/>
<dbReference type="KEGG" id="dha:DEHA2C08998g"/>
<dbReference type="VEuPathDB" id="FungiDB:DEHA2C08998g"/>
<dbReference type="eggNOG" id="KOG4522">
    <property type="taxonomic scope" value="Eukaryota"/>
</dbReference>
<dbReference type="HOGENOM" id="CLU_003142_0_0_1"/>
<dbReference type="InParanoid" id="Q6BUQ1"/>
<dbReference type="OMA" id="HWLQEWT"/>
<dbReference type="OrthoDB" id="20828at2759"/>
<dbReference type="Proteomes" id="UP000000599">
    <property type="component" value="Chromosome C"/>
</dbReference>
<dbReference type="GO" id="GO:0016592">
    <property type="term" value="C:mediator complex"/>
    <property type="evidence" value="ECO:0007669"/>
    <property type="project" value="InterPro"/>
</dbReference>
<dbReference type="GO" id="GO:0003712">
    <property type="term" value="F:transcription coregulator activity"/>
    <property type="evidence" value="ECO:0007669"/>
    <property type="project" value="InterPro"/>
</dbReference>
<dbReference type="GO" id="GO:0006357">
    <property type="term" value="P:regulation of transcription by RNA polymerase II"/>
    <property type="evidence" value="ECO:0007669"/>
    <property type="project" value="InterPro"/>
</dbReference>
<dbReference type="InterPro" id="IPR019035">
    <property type="entry name" value="Mediator_Med12"/>
</dbReference>
<dbReference type="PANTHER" id="PTHR46567">
    <property type="entry name" value="MEDIATOR OF RNA POLYMERASE II TRANSCRIPTION SUBUNIT 12"/>
    <property type="match status" value="1"/>
</dbReference>
<dbReference type="PANTHER" id="PTHR46567:SF1">
    <property type="entry name" value="MEDIATOR OF RNA POLYMERASE II TRANSCRIPTION SUBUNIT 12"/>
    <property type="match status" value="1"/>
</dbReference>
<dbReference type="Pfam" id="PF09497">
    <property type="entry name" value="Med12"/>
    <property type="match status" value="1"/>
</dbReference>
<dbReference type="SMART" id="SM01281">
    <property type="entry name" value="Med12"/>
    <property type="match status" value="1"/>
</dbReference>
<organism>
    <name type="scientific">Debaryomyces hansenii (strain ATCC 36239 / CBS 767 / BCRC 21394 / JCM 1990 / NBRC 0083 / IGC 2968)</name>
    <name type="common">Yeast</name>
    <name type="synonym">Torulaspora hansenii</name>
    <dbReference type="NCBI Taxonomy" id="284592"/>
    <lineage>
        <taxon>Eukaryota</taxon>
        <taxon>Fungi</taxon>
        <taxon>Dikarya</taxon>
        <taxon>Ascomycota</taxon>
        <taxon>Saccharomycotina</taxon>
        <taxon>Pichiomycetes</taxon>
        <taxon>Debaryomycetaceae</taxon>
        <taxon>Debaryomyces</taxon>
    </lineage>
</organism>
<name>SRB8_DEBHA</name>
<sequence length="1661" mass="191934">MSKTKNRNSLLSSHNRTSVSNSTKDELLAMKYVMDKPAIPLYPLNELSNSSESISEQNRYTSNSSTDELTYPDFKPWKDTTHLPKGKSEVEVEKLNNEAYLNKGYFEGPSVANEYYSARNLIQASLFSSSSNCDKVLKELSQHLVNSYRTRNEVINKIKYNSNKFKIPPRVTLTASKKEAWLRDLANPDEPLSNISNKLPHGIKNKMLVDILCSKNIPTSRALWLTKCVLYSELLVLKKKYQSRLPNNPHPVENTTSETFETQWLQEWTHQLVDYFYKFSKDMCNITIQEKKQVYLTKLNYLLNYVQALYIECLLDKSFFLTSILKFLKEGLPLDQSHVSELLAFSRSEGEESSLDKWLVDIDLNYGQRLISITLVKMFWKDILELDYLSKELSELLLLNYYFIERIPTYNTKSSNYSHKQNHTAALSSTLKLKLLSSISDTVNYLFKHNTNVFIIPNYWILVNETLYKILLSDVANSYDSEEQTEIRKQLKLIKYRNESLMLSMKDVQSSNFVDVNTARNLAKDRRRSNSLQQSLSQDTKNNYNSITGKKIPNTVENDNYFINRNSDDTLNIIDQLDRLKLNDTLAEMLIPSSISSSPDNFNDWRVNLKVVIYWAITIYREQMSSSEGILIICNFLKRKVLQNISVKNVNSIKAEFENEILEIIYNLAHCTDVDIIDYNLYVLINELYQLKVITISSYLRKLIASGLFYVSPSADGAQSHNENNSSVETHLAILQNLPVLNNKQCDSILRKWTPNGFNFEEKFEKGKLILKEELVDRLMSNSFDGYCDEKLTYIKNLKVGLKFLLVNWLTNYLKTSITKSPKLIHINPNIITSLYNFYALCDNLTVFFKVLIKFILRNEGKVIICYMDSLYLISKLIIRHFKLVKFIAGKSYESTTTGYELFKLIILNYKDLSTRDNDYYNFSDVWYFIDNAVEKNEPTYGKSSDGNNDNALKHKNFNQLLFAKETVDSPMRIHANSNTPQKNNDSYTATVFRNDLDLLLEAPIKLLNNTDITDFISTLELNVSNEAFNEISNTEESVIIIMEYYFKNIGEFTELHENLCMRLLINSKRSLDMTTRGIFFDIMKHFIINLVRTKPGIEKLITLFKKLMCFEVYQPHELFSTLRSILPRELSHEQMDALKYELLFGNPESDNKNLFNDQALVLRCIRYLYVKRHSNDVFITLLDSFSNEKETFFNSYALKAYNSKVLSFFRQFSISNTKFFMDGLSKVASNSDIISFLNLLIYISEEPIGSSSDLPRLASIIDEFNLPVCQVLIKIIIMNELRDSNKDKSIEKLRYILDMLLNNLKFHFVSYNSYFGELFNYLSWEHKLNILSIFEHNFLCNTEFIVSDDKFTENSVCLMSSDGRTNLLSILKDYFKKFSVSSLNTVTTSKEVFHNLSKFLLKVLQLANADIIGDSRRDAYNTISIFLRILIIHKLSLTSMIIEQDGQDLHFIKNLIALLESKFLCFNNEKLRILLYDLLLLMKSSITSSMILNPDSNLADDMTTDTSHQQHSPSNDYLSRSNPDGTEVGNSNSKYFGVSNISTIPNLSSVFNISEPNISYPLKKYTDDSKILCALMLEESELQKGGDIYALNDSKLILLPSRREALSSAFDILNETQQTVSKKRFKIESYELLEDTGIELNNGCINLSLFDAFTTKENPP</sequence>
<feature type="chain" id="PRO_0000312971" description="Mediator of RNA polymerase II transcription subunit 12">
    <location>
        <begin position="1"/>
        <end position="1661"/>
    </location>
</feature>
<feature type="region of interest" description="Disordered" evidence="2">
    <location>
        <begin position="1"/>
        <end position="22"/>
    </location>
</feature>
<feature type="region of interest" description="Disordered" evidence="2">
    <location>
        <begin position="524"/>
        <end position="550"/>
    </location>
</feature>
<feature type="region of interest" description="Disordered" evidence="2">
    <location>
        <begin position="1501"/>
        <end position="1527"/>
    </location>
</feature>
<feature type="compositionally biased region" description="Polar residues" evidence="2">
    <location>
        <begin position="7"/>
        <end position="22"/>
    </location>
</feature>
<feature type="compositionally biased region" description="Polar residues" evidence="2">
    <location>
        <begin position="539"/>
        <end position="548"/>
    </location>
</feature>
<feature type="compositionally biased region" description="Polar residues" evidence="2">
    <location>
        <begin position="1505"/>
        <end position="1527"/>
    </location>
</feature>
<accession>Q6BUQ1</accession>
<evidence type="ECO:0000250" key="1"/>
<evidence type="ECO:0000256" key="2">
    <source>
        <dbReference type="SAM" id="MobiDB-lite"/>
    </source>
</evidence>
<evidence type="ECO:0000305" key="3"/>
<protein>
    <recommendedName>
        <fullName>Mediator of RNA polymerase II transcription subunit 12</fullName>
    </recommendedName>
    <alternativeName>
        <fullName>Mediator complex subunit 12</fullName>
    </alternativeName>
</protein>
<proteinExistence type="inferred from homology"/>
<gene>
    <name type="primary">SRB8</name>
    <name type="synonym">MED12</name>
    <name type="ordered locus">DEHA2C08998g</name>
</gene>
<keyword id="KW-0010">Activator</keyword>
<keyword id="KW-0539">Nucleus</keyword>
<keyword id="KW-1185">Reference proteome</keyword>
<keyword id="KW-0678">Repressor</keyword>
<keyword id="KW-0804">Transcription</keyword>
<keyword id="KW-0805">Transcription regulation</keyword>
<reference key="1">
    <citation type="journal article" date="2004" name="Nature">
        <title>Genome evolution in yeasts.</title>
        <authorList>
            <person name="Dujon B."/>
            <person name="Sherman D."/>
            <person name="Fischer G."/>
            <person name="Durrens P."/>
            <person name="Casaregola S."/>
            <person name="Lafontaine I."/>
            <person name="de Montigny J."/>
            <person name="Marck C."/>
            <person name="Neuveglise C."/>
            <person name="Talla E."/>
            <person name="Goffard N."/>
            <person name="Frangeul L."/>
            <person name="Aigle M."/>
            <person name="Anthouard V."/>
            <person name="Babour A."/>
            <person name="Barbe V."/>
            <person name="Barnay S."/>
            <person name="Blanchin S."/>
            <person name="Beckerich J.-M."/>
            <person name="Beyne E."/>
            <person name="Bleykasten C."/>
            <person name="Boisrame A."/>
            <person name="Boyer J."/>
            <person name="Cattolico L."/>
            <person name="Confanioleri F."/>
            <person name="de Daruvar A."/>
            <person name="Despons L."/>
            <person name="Fabre E."/>
            <person name="Fairhead C."/>
            <person name="Ferry-Dumazet H."/>
            <person name="Groppi A."/>
            <person name="Hantraye F."/>
            <person name="Hennequin C."/>
            <person name="Jauniaux N."/>
            <person name="Joyet P."/>
            <person name="Kachouri R."/>
            <person name="Kerrest A."/>
            <person name="Koszul R."/>
            <person name="Lemaire M."/>
            <person name="Lesur I."/>
            <person name="Ma L."/>
            <person name="Muller H."/>
            <person name="Nicaud J.-M."/>
            <person name="Nikolski M."/>
            <person name="Oztas S."/>
            <person name="Ozier-Kalogeropoulos O."/>
            <person name="Pellenz S."/>
            <person name="Potier S."/>
            <person name="Richard G.-F."/>
            <person name="Straub M.-L."/>
            <person name="Suleau A."/>
            <person name="Swennen D."/>
            <person name="Tekaia F."/>
            <person name="Wesolowski-Louvel M."/>
            <person name="Westhof E."/>
            <person name="Wirth B."/>
            <person name="Zeniou-Meyer M."/>
            <person name="Zivanovic Y."/>
            <person name="Bolotin-Fukuhara M."/>
            <person name="Thierry A."/>
            <person name="Bouchier C."/>
            <person name="Caudron B."/>
            <person name="Scarpelli C."/>
            <person name="Gaillardin C."/>
            <person name="Weissenbach J."/>
            <person name="Wincker P."/>
            <person name="Souciet J.-L."/>
        </authorList>
    </citation>
    <scope>NUCLEOTIDE SEQUENCE [LARGE SCALE GENOMIC DNA]</scope>
    <source>
        <strain>ATCC 36239 / CBS 767 / BCRC 21394 / JCM 1990 / NBRC 0083 / IGC 2968</strain>
    </source>
</reference>